<feature type="chain" id="PRO_1000206285" description="Ion-translocating oxidoreductase complex subunit A">
    <location>
        <begin position="1"/>
        <end position="193"/>
    </location>
</feature>
<feature type="transmembrane region" description="Helical" evidence="1">
    <location>
        <begin position="5"/>
        <end position="25"/>
    </location>
</feature>
<feature type="transmembrane region" description="Helical" evidence="1">
    <location>
        <begin position="39"/>
        <end position="59"/>
    </location>
</feature>
<feature type="transmembrane region" description="Helical" evidence="1">
    <location>
        <begin position="62"/>
        <end position="82"/>
    </location>
</feature>
<feature type="transmembrane region" description="Helical" evidence="1">
    <location>
        <begin position="102"/>
        <end position="122"/>
    </location>
</feature>
<feature type="transmembrane region" description="Helical" evidence="1">
    <location>
        <begin position="134"/>
        <end position="154"/>
    </location>
</feature>
<feature type="transmembrane region" description="Helical" evidence="1">
    <location>
        <begin position="171"/>
        <end position="191"/>
    </location>
</feature>
<evidence type="ECO:0000255" key="1">
    <source>
        <dbReference type="HAMAP-Rule" id="MF_00459"/>
    </source>
</evidence>
<sequence length="193" mass="20703">MTDYLLLLVGTVLVNNFVLVKFLGLCPFMGVSKKLETAMGMGLATTFVLTLASVCAWAVNQFILVPLGLAYLRTLTFILVIAVVVQFTELAVRKTSPMLYRLLGIFLPLITTNCAVLGVALLNVNQSHNFLQSAVYGFSAAVGFSLVMVLFAAIRERLALADVPAPFRGASIALITAGLMSLAFMGFSGLVKF</sequence>
<organism>
    <name type="scientific">Edwardsiella ictaluri (strain 93-146)</name>
    <dbReference type="NCBI Taxonomy" id="634503"/>
    <lineage>
        <taxon>Bacteria</taxon>
        <taxon>Pseudomonadati</taxon>
        <taxon>Pseudomonadota</taxon>
        <taxon>Gammaproteobacteria</taxon>
        <taxon>Enterobacterales</taxon>
        <taxon>Hafniaceae</taxon>
        <taxon>Edwardsiella</taxon>
    </lineage>
</organism>
<accession>C5BDE5</accession>
<keyword id="KW-0997">Cell inner membrane</keyword>
<keyword id="KW-1003">Cell membrane</keyword>
<keyword id="KW-0249">Electron transport</keyword>
<keyword id="KW-0472">Membrane</keyword>
<keyword id="KW-1278">Translocase</keyword>
<keyword id="KW-0812">Transmembrane</keyword>
<keyword id="KW-1133">Transmembrane helix</keyword>
<keyword id="KW-0813">Transport</keyword>
<name>RNFA_EDWI9</name>
<comment type="function">
    <text evidence="1">Part of a membrane-bound complex that couples electron transfer with translocation of ions across the membrane.</text>
</comment>
<comment type="subunit">
    <text evidence="1">The complex is composed of six subunits: RnfA, RnfB, RnfC, RnfD, RnfE and RnfG.</text>
</comment>
<comment type="subcellular location">
    <subcellularLocation>
        <location evidence="1">Cell inner membrane</location>
        <topology evidence="1">Multi-pass membrane protein</topology>
    </subcellularLocation>
</comment>
<comment type="similarity">
    <text evidence="1">Belongs to the NqrDE/RnfAE family.</text>
</comment>
<reference key="1">
    <citation type="submission" date="2009-03" db="EMBL/GenBank/DDBJ databases">
        <title>Complete genome sequence of Edwardsiella ictaluri 93-146.</title>
        <authorList>
            <person name="Williams M.L."/>
            <person name="Gillaspy A.F."/>
            <person name="Dyer D.W."/>
            <person name="Thune R.L."/>
            <person name="Waldbieser G.C."/>
            <person name="Schuster S.C."/>
            <person name="Gipson J."/>
            <person name="Zaitshik J."/>
            <person name="Landry C."/>
            <person name="Lawrence M.L."/>
        </authorList>
    </citation>
    <scope>NUCLEOTIDE SEQUENCE [LARGE SCALE GENOMIC DNA]</scope>
    <source>
        <strain>93-146</strain>
    </source>
</reference>
<protein>
    <recommendedName>
        <fullName evidence="1">Ion-translocating oxidoreductase complex subunit A</fullName>
        <ecNumber evidence="1">7.-.-.-</ecNumber>
    </recommendedName>
    <alternativeName>
        <fullName evidence="1">Rnf electron transport complex subunit A</fullName>
    </alternativeName>
</protein>
<gene>
    <name evidence="1" type="primary">rnfA</name>
    <name type="ordered locus">NT01EI_2086</name>
</gene>
<proteinExistence type="inferred from homology"/>
<dbReference type="EC" id="7.-.-.-" evidence="1"/>
<dbReference type="EMBL" id="CP001600">
    <property type="protein sequence ID" value="ACR69262.1"/>
    <property type="molecule type" value="Genomic_DNA"/>
</dbReference>
<dbReference type="SMR" id="C5BDE5"/>
<dbReference type="STRING" id="67780.B6E78_03040"/>
<dbReference type="KEGG" id="eic:NT01EI_2086"/>
<dbReference type="PATRIC" id="fig|634503.3.peg.1862"/>
<dbReference type="HOGENOM" id="CLU_095255_1_0_6"/>
<dbReference type="OrthoDB" id="9803631at2"/>
<dbReference type="Proteomes" id="UP000001485">
    <property type="component" value="Chromosome"/>
</dbReference>
<dbReference type="GO" id="GO:0005886">
    <property type="term" value="C:plasma membrane"/>
    <property type="evidence" value="ECO:0007669"/>
    <property type="project" value="UniProtKB-SubCell"/>
</dbReference>
<dbReference type="GO" id="GO:0022900">
    <property type="term" value="P:electron transport chain"/>
    <property type="evidence" value="ECO:0007669"/>
    <property type="project" value="UniProtKB-UniRule"/>
</dbReference>
<dbReference type="HAMAP" id="MF_00459">
    <property type="entry name" value="RsxA_RnfA"/>
    <property type="match status" value="1"/>
</dbReference>
<dbReference type="InterPro" id="IPR011293">
    <property type="entry name" value="Ion_transpt_RnfA/RsxA"/>
</dbReference>
<dbReference type="InterPro" id="IPR003667">
    <property type="entry name" value="NqrDE/RnfAE"/>
</dbReference>
<dbReference type="InterPro" id="IPR050133">
    <property type="entry name" value="NqrDE/RnfAE_oxidrdctase"/>
</dbReference>
<dbReference type="NCBIfam" id="NF003481">
    <property type="entry name" value="PRK05151.1"/>
    <property type="match status" value="1"/>
</dbReference>
<dbReference type="NCBIfam" id="TIGR01943">
    <property type="entry name" value="rnfA"/>
    <property type="match status" value="1"/>
</dbReference>
<dbReference type="PANTHER" id="PTHR30335">
    <property type="entry name" value="INTEGRAL MEMBRANE PROTEIN OF SOXR-REDUCING COMPLEX"/>
    <property type="match status" value="1"/>
</dbReference>
<dbReference type="PANTHER" id="PTHR30335:SF0">
    <property type="entry name" value="ION-TRANSLOCATING OXIDOREDUCTASE COMPLEX SUBUNIT A"/>
    <property type="match status" value="1"/>
</dbReference>
<dbReference type="Pfam" id="PF02508">
    <property type="entry name" value="Rnf-Nqr"/>
    <property type="match status" value="1"/>
</dbReference>
<dbReference type="PIRSF" id="PIRSF006102">
    <property type="entry name" value="NQR_DE"/>
    <property type="match status" value="1"/>
</dbReference>